<sequence length="248" mass="26611">MALLEICCYSMECALTAQRNGADRIELCAAPKEGGLTPSFGVLRSVREHITIPVHPIIRPRGGDFYYTDGEFAAMLEDIRLVRELGFPGLVTGVLTVDGDVDMSRMEKIMAAAGPLAVTFHRAFDMCANPFNALKNLADAGVARVLTSGQKADAAQGLSIIMELIAQGDAPTIMAGAGVRANNLQNFLDAGVREVHSSAGVLLPSPMRYRNQGLSMSADIQADEYSRYRVEGAAVAEMKGIIVRHQAK</sequence>
<reference key="1">
    <citation type="journal article" date="2001" name="Nature">
        <title>Complete genome sequence of Salmonella enterica serovar Typhimurium LT2.</title>
        <authorList>
            <person name="McClelland M."/>
            <person name="Sanderson K.E."/>
            <person name="Spieth J."/>
            <person name="Clifton S.W."/>
            <person name="Latreille P."/>
            <person name="Courtney L."/>
            <person name="Porwollik S."/>
            <person name="Ali J."/>
            <person name="Dante M."/>
            <person name="Du F."/>
            <person name="Hou S."/>
            <person name="Layman D."/>
            <person name="Leonard S."/>
            <person name="Nguyen C."/>
            <person name="Scott K."/>
            <person name="Holmes A."/>
            <person name="Grewal N."/>
            <person name="Mulvaney E."/>
            <person name="Ryan E."/>
            <person name="Sun H."/>
            <person name="Florea L."/>
            <person name="Miller W."/>
            <person name="Stoneking T."/>
            <person name="Nhan M."/>
            <person name="Waterston R."/>
            <person name="Wilson R.K."/>
        </authorList>
    </citation>
    <scope>NUCLEOTIDE SEQUENCE [LARGE SCALE GENOMIC DNA]</scope>
    <source>
        <strain>LT2 / SGSC1412 / ATCC 700720</strain>
    </source>
</reference>
<gene>
    <name evidence="1" type="primary">cutC</name>
    <name type="ordered locus">STM1907</name>
</gene>
<name>CUTC_SALTY</name>
<organism>
    <name type="scientific">Salmonella typhimurium (strain LT2 / SGSC1412 / ATCC 700720)</name>
    <dbReference type="NCBI Taxonomy" id="99287"/>
    <lineage>
        <taxon>Bacteria</taxon>
        <taxon>Pseudomonadati</taxon>
        <taxon>Pseudomonadota</taxon>
        <taxon>Gammaproteobacteria</taxon>
        <taxon>Enterobacterales</taxon>
        <taxon>Enterobacteriaceae</taxon>
        <taxon>Salmonella</taxon>
    </lineage>
</organism>
<feature type="chain" id="PRO_0000215075" description="PF03932 family protein CutC">
    <location>
        <begin position="1"/>
        <end position="248"/>
    </location>
</feature>
<dbReference type="EMBL" id="AE006468">
    <property type="protein sequence ID" value="AAL20823.1"/>
    <property type="molecule type" value="Genomic_DNA"/>
</dbReference>
<dbReference type="RefSeq" id="NP_460864.1">
    <property type="nucleotide sequence ID" value="NC_003197.2"/>
</dbReference>
<dbReference type="RefSeq" id="WP_001185770.1">
    <property type="nucleotide sequence ID" value="NC_003197.2"/>
</dbReference>
<dbReference type="SMR" id="Q8ZNV0"/>
<dbReference type="STRING" id="99287.STM1907"/>
<dbReference type="PaxDb" id="99287-STM1907"/>
<dbReference type="GeneID" id="1253428"/>
<dbReference type="KEGG" id="stm:STM1907"/>
<dbReference type="PATRIC" id="fig|99287.12.peg.2022"/>
<dbReference type="HOGENOM" id="CLU_050555_3_1_6"/>
<dbReference type="OMA" id="HRAFDQC"/>
<dbReference type="PhylomeDB" id="Q8ZNV0"/>
<dbReference type="BioCyc" id="SENT99287:STM1907-MONOMER"/>
<dbReference type="Proteomes" id="UP000001014">
    <property type="component" value="Chromosome"/>
</dbReference>
<dbReference type="GO" id="GO:0005737">
    <property type="term" value="C:cytoplasm"/>
    <property type="evidence" value="ECO:0007669"/>
    <property type="project" value="UniProtKB-SubCell"/>
</dbReference>
<dbReference type="GO" id="GO:0005507">
    <property type="term" value="F:copper ion binding"/>
    <property type="evidence" value="ECO:0000318"/>
    <property type="project" value="GO_Central"/>
</dbReference>
<dbReference type="FunFam" id="3.20.20.380:FF:000001">
    <property type="entry name" value="Copper homeostasis protein CutC"/>
    <property type="match status" value="1"/>
</dbReference>
<dbReference type="Gene3D" id="3.20.20.380">
    <property type="entry name" value="Copper homeostasis (CutC) domain"/>
    <property type="match status" value="1"/>
</dbReference>
<dbReference type="HAMAP" id="MF_00795">
    <property type="entry name" value="CutC"/>
    <property type="match status" value="1"/>
</dbReference>
<dbReference type="InterPro" id="IPR005627">
    <property type="entry name" value="CutC-like"/>
</dbReference>
<dbReference type="InterPro" id="IPR036822">
    <property type="entry name" value="CutC-like_dom_sf"/>
</dbReference>
<dbReference type="NCBIfam" id="NF008603">
    <property type="entry name" value="PRK11572.1"/>
    <property type="match status" value="1"/>
</dbReference>
<dbReference type="PANTHER" id="PTHR12598">
    <property type="entry name" value="COPPER HOMEOSTASIS PROTEIN CUTC"/>
    <property type="match status" value="1"/>
</dbReference>
<dbReference type="PANTHER" id="PTHR12598:SF0">
    <property type="entry name" value="COPPER HOMEOSTASIS PROTEIN CUTC HOMOLOG"/>
    <property type="match status" value="1"/>
</dbReference>
<dbReference type="Pfam" id="PF03932">
    <property type="entry name" value="CutC"/>
    <property type="match status" value="1"/>
</dbReference>
<dbReference type="SUPFAM" id="SSF110395">
    <property type="entry name" value="CutC-like"/>
    <property type="match status" value="1"/>
</dbReference>
<comment type="subunit">
    <text evidence="1">Homodimer.</text>
</comment>
<comment type="subcellular location">
    <subcellularLocation>
        <location evidence="1">Cytoplasm</location>
    </subcellularLocation>
</comment>
<comment type="similarity">
    <text evidence="1">Belongs to the CutC family.</text>
</comment>
<comment type="caution">
    <text evidence="1">Once thought to be involved in copper homeostasis, experiments in E.coli have shown this is not the case.</text>
</comment>
<keyword id="KW-0963">Cytoplasm</keyword>
<keyword id="KW-1185">Reference proteome</keyword>
<protein>
    <recommendedName>
        <fullName evidence="1">PF03932 family protein CutC</fullName>
    </recommendedName>
</protein>
<accession>Q8ZNV0</accession>
<evidence type="ECO:0000255" key="1">
    <source>
        <dbReference type="HAMAP-Rule" id="MF_00795"/>
    </source>
</evidence>
<proteinExistence type="inferred from homology"/>